<name>CRNA_PSEPU</name>
<reference key="1">
    <citation type="journal article" date="1995" name="Biosci. Biotechnol. Biochem.">
        <title>Cloning of the creatinine amidohydrolase gene from Pseudomonas sp. PS-7.</title>
        <authorList>
            <person name="Yamamoto K."/>
            <person name="Oka M."/>
            <person name="Kikuchi T."/>
            <person name="Emi S."/>
        </authorList>
    </citation>
    <scope>NUCLEOTIDE SEQUENCE [GENOMIC DNA]</scope>
    <scope>PROTEIN SEQUENCE OF 2-6</scope>
    <source>
        <strain>PS-7</strain>
    </source>
</reference>
<reference key="2">
    <citation type="journal article" date="1979" name="J. Biochem.">
        <title>Creatinine amidohydrolase (creatininase) from Pseudomonas putida. Purification and some properties.</title>
        <authorList>
            <person name="Rikitake K."/>
            <person name="Oka I."/>
            <person name="Ando M."/>
            <person name="Yoshimoto T."/>
            <person name="Tsuru D."/>
        </authorList>
    </citation>
    <scope>FUNCTION</scope>
    <scope>CATALYTIC ACTIVITY</scope>
    <scope>SUBSTRATE SPECIFICITY</scope>
    <scope>BIOPHYSICOCHEMICAL PROPERTIES</scope>
    <scope>ACTIVITY REGULATION</scope>
    <source>
        <strain>C-83</strain>
    </source>
</reference>
<reference key="3">
    <citation type="journal article" date="2003" name="J. Mol. Biol.">
        <title>Crystal structure of creatininase from Pseudomonas putida: a novel fold and a case of convergent evolution.</title>
        <authorList>
            <person name="Beuth B."/>
            <person name="Niefind K."/>
            <person name="Schomburg D."/>
        </authorList>
    </citation>
    <scope>X-RAY CRYSTALLOGRAPHY (2.10 ANGSTROMS) OF 2-260 IN COMPLEX WITH ZINC</scope>
    <scope>COFACTOR</scope>
    <scope>SUBUNIT</scope>
</reference>
<reference key="4">
    <citation type="journal article" date="2004" name="J. Mol. Biol.">
        <title>Crystal structures of creatininase reveal the substrate binding site and provide an insight into the catalytic mechanism.</title>
        <authorList>
            <person name="Yoshimoto T."/>
            <person name="Tanaka N."/>
            <person name="Kanada N."/>
            <person name="Inoue T."/>
            <person name="Nakajima Y."/>
            <person name="Haratake M."/>
            <person name="Nakamura K.T."/>
            <person name="Xu Y."/>
            <person name="Ito K."/>
        </authorList>
    </citation>
    <scope>X-RAY CRYSTALLOGRAPHY (1.60 ANGSTROMS) OF APOENZYME AND COMPLEXES WITH CREATINE; ZINC AND MANGANESE</scope>
    <scope>COFACTOR</scope>
    <scope>SUBUNIT</scope>
    <scope>CATALYTIC MECHANISM</scope>
</reference>
<reference key="5">
    <citation type="journal article" date="2010" name="J. Mol. Biol.">
        <title>Substitution of Glu122 by glutamine revealed the function of the second water molecule as a proton donor in the binuclear metal enzyme creatininase.</title>
        <authorList>
            <person name="Yamashita K."/>
            <person name="Nakajima Y."/>
            <person name="Matsushita H."/>
            <person name="Nishiya Y."/>
            <person name="Yamazawa R."/>
            <person name="Wu Y.F."/>
            <person name="Matsubara F."/>
            <person name="Oyama H."/>
            <person name="Ito K."/>
            <person name="Yoshimoto T."/>
        </authorList>
    </citation>
    <scope>X-RAY CRYSTALLOGRAPHY (1.78 ANGSTROMS) OF WILD-TYPE IN COMPLEX WITH 1-METHYLGUANIDINE INHIBITOR AND MUTANTS ALA-154; PHE-154; PHE-174 AND GLN-122 IN COMPLEX WITH CREATINE; ZINC AND MANGANESE</scope>
    <scope>CATALYTIC ACTIVITY</scope>
    <scope>KINETIC PARAMETERS</scope>
    <scope>CATALYTIC MECHANISM</scope>
    <scope>MUTAGENESIS OF TYR-121; GLU-122; TRP-154; TRP-174 AND GLU-183</scope>
</reference>
<organism>
    <name type="scientific">Pseudomonas putida</name>
    <name type="common">Arthrobacter siderocapsulatus</name>
    <dbReference type="NCBI Taxonomy" id="303"/>
    <lineage>
        <taxon>Bacteria</taxon>
        <taxon>Pseudomonadati</taxon>
        <taxon>Pseudomonadota</taxon>
        <taxon>Gammaproteobacteria</taxon>
        <taxon>Pseudomonadales</taxon>
        <taxon>Pseudomonadaceae</taxon>
        <taxon>Pseudomonas</taxon>
    </lineage>
</organism>
<comment type="function">
    <text evidence="4">Cyclic amidohydrolase that catalyzes the reversible conversion of creatinine to creatine. Is also active toward glycocyamidine, though the reaction rate is very low, but it is completely inert toward hydantoin and its derivatives.</text>
</comment>
<comment type="catalytic activity">
    <reaction evidence="3 4">
        <text>creatinine + H2O = creatine</text>
        <dbReference type="Rhea" id="RHEA:14533"/>
        <dbReference type="ChEBI" id="CHEBI:15377"/>
        <dbReference type="ChEBI" id="CHEBI:16737"/>
        <dbReference type="ChEBI" id="CHEBI:57947"/>
        <dbReference type="EC" id="3.5.2.10"/>
    </reaction>
</comment>
<comment type="cofactor">
    <cofactor evidence="1">
        <name>Zn(2+)</name>
        <dbReference type="ChEBI" id="CHEBI:29105"/>
    </cofactor>
    <cofactor evidence="1 2 3">
        <name>Mn(2+)</name>
        <dbReference type="ChEBI" id="CHEBI:29035"/>
    </cofactor>
    <text evidence="1 2">Binds 2 Zn(2+) ions or 1 Zn(2+) and 1 Mn(2+) per subunit. The Zn(2+) in the metal 1 binding site can be replaced with Mn(2+); however, the second zinc in metal binding site 2 is much more tightly bound and cannot be replaced. The enzyme with one zinc and one manganese ion is more active than that with two zinc ions.</text>
</comment>
<comment type="activity regulation">
    <text evidence="4">Is markedly inactivated in vitro by heavy metal ions, N-bromosuccinimide, ethoxyformic anhydride, and dye-sensitized photooxidation.</text>
</comment>
<comment type="biophysicochemical properties">
    <kinetics>
        <KM evidence="3 4">26 mM for creatinine</KM>
        <KM evidence="3 4">130 mM for creatine</KM>
        <KM evidence="3 4">200 mM for glycocyamidine</KM>
        <Vmax evidence="3 4">390.0 umol/min/mg enzyme for the forward reaction (creatine formation)</Vmax>
        <Vmax evidence="3 4">1510.0 umol/min/mg enzyme for the reverse reaction (creatinine formation)</Vmax>
        <Vmax evidence="3 4">3.7 umol/min/mg enzyme with glycocyamidine as substrate</Vmax>
    </kinetics>
    <phDependence>
        <text evidence="4">Optimum pH is 7-9 for the forward and reverse reactions.</text>
    </phDependence>
    <temperatureDependence>
        <text evidence="4">Retains 75% of the activity after incubation at 75 degrees Celsius for 30 minutes.</text>
    </temperatureDependence>
</comment>
<comment type="pathway">
    <text>Amine and polyamine degradation; creatinine degradation.</text>
</comment>
<comment type="subunit">
    <text evidence="1 2 3">Homohexamer; trimer of dimers.</text>
</comment>
<comment type="miscellaneous">
    <text>The proposed catalytic mechanism involves two water molecules. The first molecule is a hydroxide ion that is bound as a bridge between the two metal ions and attacks the carbonyl carbon of the substrate. The second water molecule, that is bound to the carboxyl group of Glu-122 and to the metal 1, functions as a proton donor in catalysis.</text>
</comment>
<comment type="similarity">
    <text evidence="5">Belongs to the creatininase superfamily.</text>
</comment>
<protein>
    <recommendedName>
        <fullName>Creatinine amidohydrolase</fullName>
        <ecNumber>3.5.2.10</ecNumber>
    </recommendedName>
    <alternativeName>
        <fullName>Creatininase</fullName>
    </alternativeName>
</protein>
<feature type="initiator methionine" description="Removed" evidence="6">
    <location>
        <position position="1"/>
    </location>
</feature>
<feature type="chain" id="PRO_0000406934" description="Creatinine amidohydrolase">
    <location>
        <begin position="2"/>
        <end position="260"/>
    </location>
</feature>
<feature type="binding site" evidence="2 3 7 9">
    <location>
        <position position="34"/>
    </location>
    <ligand>
        <name>Mn(2+)</name>
        <dbReference type="ChEBI" id="CHEBI:29035"/>
    </ligand>
</feature>
<feature type="binding site" evidence="1 3 10">
    <location>
        <position position="34"/>
    </location>
    <ligand>
        <name>Zn(2+)</name>
        <dbReference type="ChEBI" id="CHEBI:29105"/>
        <label>1</label>
    </ligand>
</feature>
<feature type="binding site" evidence="1 2 3 7 8 9 10">
    <location>
        <position position="36"/>
    </location>
    <ligand>
        <name>Zn(2+)</name>
        <dbReference type="ChEBI" id="CHEBI:29105"/>
        <label>2</label>
    </ligand>
</feature>
<feature type="binding site" evidence="2 3 7 9">
    <location>
        <position position="45"/>
    </location>
    <ligand>
        <name>Mn(2+)</name>
        <dbReference type="ChEBI" id="CHEBI:29035"/>
    </ligand>
</feature>
<feature type="binding site" evidence="1 3 10">
    <location>
        <position position="45"/>
    </location>
    <ligand>
        <name>Zn(2+)</name>
        <dbReference type="ChEBI" id="CHEBI:29105"/>
        <label>1</label>
    </ligand>
</feature>
<feature type="binding site" evidence="1 2 3 7 8 9 10">
    <location>
        <position position="45"/>
    </location>
    <ligand>
        <name>Zn(2+)</name>
        <dbReference type="ChEBI" id="CHEBI:29105"/>
        <label>2</label>
    </ligand>
</feature>
<feature type="binding site" evidence="2 3 7 8">
    <location>
        <position position="78"/>
    </location>
    <ligand>
        <name>creatine</name>
        <dbReference type="ChEBI" id="CHEBI:57947"/>
    </ligand>
</feature>
<feature type="binding site" evidence="2 3 7 9">
    <location>
        <position position="120"/>
    </location>
    <ligand>
        <name>Mn(2+)</name>
        <dbReference type="ChEBI" id="CHEBI:29035"/>
    </ligand>
</feature>
<feature type="binding site" evidence="1 3 10">
    <location>
        <position position="120"/>
    </location>
    <ligand>
        <name>Zn(2+)</name>
        <dbReference type="ChEBI" id="CHEBI:29105"/>
        <label>1</label>
    </ligand>
</feature>
<feature type="binding site" evidence="2 3 7 8">
    <location>
        <position position="121"/>
    </location>
    <ligand>
        <name>creatine</name>
        <dbReference type="ChEBI" id="CHEBI:57947"/>
    </ligand>
</feature>
<feature type="binding site" evidence="2 3 7 8">
    <location>
        <position position="174"/>
    </location>
    <ligand>
        <name>creatine</name>
        <dbReference type="ChEBI" id="CHEBI:57947"/>
    </ligand>
</feature>
<feature type="binding site" evidence="2 3 7 8">
    <location>
        <position position="175"/>
    </location>
    <ligand>
        <name>creatine</name>
        <dbReference type="ChEBI" id="CHEBI:57947"/>
    </ligand>
</feature>
<feature type="binding site" evidence="2 3 7 8">
    <location>
        <position position="178"/>
    </location>
    <ligand>
        <name>creatine</name>
        <dbReference type="ChEBI" id="CHEBI:57947"/>
    </ligand>
</feature>
<feature type="binding site" evidence="1 2 3 7 8 9 10">
    <location>
        <position position="183"/>
    </location>
    <ligand>
        <name>Zn(2+)</name>
        <dbReference type="ChEBI" id="CHEBI:29105"/>
        <label>2</label>
    </ligand>
</feature>
<feature type="site" description="Coordinates a catalytic water molecule">
    <location>
        <position position="122"/>
    </location>
</feature>
<feature type="mutagenesis site" description="30-fold decrease in catalytic efficiency." evidence="3">
    <original>Y</original>
    <variation>A</variation>
    <location>
        <position position="121"/>
    </location>
</feature>
<feature type="mutagenesis site" description="700-fold decrease in catalytic efficiency. No ion in metal binding site 1." evidence="3">
    <original>E</original>
    <variation>Q</variation>
    <location>
        <position position="122"/>
    </location>
</feature>
<feature type="mutagenesis site" description="Loss of activity." evidence="3">
    <original>W</original>
    <variation>A</variation>
    <location>
        <position position="154"/>
    </location>
</feature>
<feature type="mutagenesis site" description="340-fold decrease in catalytic efficiency." evidence="3">
    <original>W</original>
    <variation>F</variation>
    <location>
        <position position="154"/>
    </location>
</feature>
<feature type="mutagenesis site" description="Nearly no activity." evidence="3">
    <original>W</original>
    <variation>A</variation>
    <location>
        <position position="174"/>
    </location>
</feature>
<feature type="mutagenesis site" description="2-fold decrease in catalytic efficiency." evidence="3">
    <original>W</original>
    <variation>F</variation>
    <location>
        <position position="174"/>
    </location>
</feature>
<feature type="mutagenesis site" description="Loss of activity.">
    <original>H</original>
    <variation>A</variation>
    <location>
        <position position="178"/>
    </location>
</feature>
<feature type="mutagenesis site" description="Loss of activity." evidence="3">
    <original>E</original>
    <variation>Q</variation>
    <location>
        <position position="183"/>
    </location>
</feature>
<feature type="helix" evidence="11">
    <location>
        <begin position="7"/>
        <end position="9"/>
    </location>
</feature>
<feature type="helix" evidence="11">
    <location>
        <begin position="12"/>
        <end position="20"/>
    </location>
</feature>
<feature type="strand" evidence="11">
    <location>
        <begin position="26"/>
        <end position="30"/>
    </location>
</feature>
<feature type="strand" evidence="11">
    <location>
        <begin position="38"/>
        <end position="40"/>
    </location>
</feature>
<feature type="helix" evidence="11">
    <location>
        <begin position="44"/>
        <end position="60"/>
    </location>
</feature>
<feature type="helix" evidence="11">
    <location>
        <begin position="76"/>
        <end position="79"/>
    </location>
</feature>
<feature type="strand" evidence="11">
    <location>
        <begin position="84"/>
        <end position="86"/>
    </location>
</feature>
<feature type="helix" evidence="11">
    <location>
        <begin position="92"/>
        <end position="109"/>
    </location>
</feature>
<feature type="strand" evidence="11">
    <location>
        <begin position="113"/>
        <end position="118"/>
    </location>
</feature>
<feature type="helix" evidence="11">
    <location>
        <begin position="121"/>
        <end position="123"/>
    </location>
</feature>
<feature type="helix" evidence="11">
    <location>
        <begin position="124"/>
        <end position="140"/>
    </location>
</feature>
<feature type="strand" evidence="11">
    <location>
        <begin position="147"/>
        <end position="152"/>
    </location>
</feature>
<feature type="helix" evidence="11">
    <location>
        <begin position="153"/>
        <end position="156"/>
    </location>
</feature>
<feature type="helix" evidence="11">
    <location>
        <begin position="160"/>
        <end position="166"/>
    </location>
</feature>
<feature type="helix" evidence="12">
    <location>
        <begin position="174"/>
        <end position="176"/>
    </location>
</feature>
<feature type="strand" evidence="11">
    <location>
        <begin position="178"/>
        <end position="180"/>
    </location>
</feature>
<feature type="helix" evidence="11">
    <location>
        <begin position="181"/>
        <end position="190"/>
    </location>
</feature>
<feature type="helix" evidence="11">
    <location>
        <begin position="192"/>
        <end position="194"/>
    </location>
</feature>
<feature type="helix" evidence="11">
    <location>
        <begin position="197"/>
        <end position="199"/>
    </location>
</feature>
<feature type="strand" evidence="11">
    <location>
        <begin position="210"/>
        <end position="215"/>
    </location>
</feature>
<feature type="helix" evidence="11">
    <location>
        <begin position="218"/>
        <end position="220"/>
    </location>
</feature>
<feature type="helix" evidence="11">
    <location>
        <begin position="235"/>
        <end position="256"/>
    </location>
</feature>
<evidence type="ECO:0000269" key="1">
    <source>
    </source>
</evidence>
<evidence type="ECO:0000269" key="2">
    <source>
    </source>
</evidence>
<evidence type="ECO:0000269" key="3">
    <source>
    </source>
</evidence>
<evidence type="ECO:0000269" key="4">
    <source>
    </source>
</evidence>
<evidence type="ECO:0000305" key="5"/>
<evidence type="ECO:0000305" key="6">
    <source>
    </source>
</evidence>
<evidence type="ECO:0007744" key="7">
    <source>
        <dbReference type="PDB" id="1V7Z"/>
    </source>
</evidence>
<evidence type="ECO:0007744" key="8">
    <source>
        <dbReference type="PDB" id="3A6J"/>
    </source>
</evidence>
<evidence type="ECO:0007744" key="9">
    <source>
        <dbReference type="PDB" id="3A6K"/>
    </source>
</evidence>
<evidence type="ECO:0007744" key="10">
    <source>
        <dbReference type="PDB" id="3A6L"/>
    </source>
</evidence>
<evidence type="ECO:0007829" key="11">
    <source>
        <dbReference type="PDB" id="1V7Z"/>
    </source>
</evidence>
<evidence type="ECO:0007829" key="12">
    <source>
        <dbReference type="PDB" id="3A6F"/>
    </source>
</evidence>
<keyword id="KW-0002">3D-structure</keyword>
<keyword id="KW-0903">Direct protein sequencing</keyword>
<keyword id="KW-0378">Hydrolase</keyword>
<keyword id="KW-0464">Manganese</keyword>
<keyword id="KW-0479">Metal-binding</keyword>
<keyword id="KW-0862">Zinc</keyword>
<gene>
    <name type="primary">crnA</name>
</gene>
<sequence>MSKSVFVGELTWKEYEARVAAGDCVLMLPVGALEQHGHHMCMNVDVLLPTAVCKRVAERIGALVMPGLQYGYKSQQKSGGGNHFPGTTSLDGATLTGTVQDIIRELARHGARRLVLMNGHYENSMFIVEGIDLALRELRYAGIQDFKVVVLSYWDFVKDPAVIQQLYPEGFLGWDIEHGGVFETSLMLALYPDLVDLDRVVDHPPATFPPYDVFPVDPARTPAPGTLSSAKTASREKGELILEVCVQGIADAIREEFPPT</sequence>
<proteinExistence type="evidence at protein level"/>
<accession>P83772</accession>
<accession>Q52548</accession>
<dbReference type="EC" id="3.5.2.10"/>
<dbReference type="EMBL" id="D45424">
    <property type="protein sequence ID" value="BAA08265.1"/>
    <property type="molecule type" value="Genomic_DNA"/>
</dbReference>
<dbReference type="PIR" id="T48846">
    <property type="entry name" value="T48846"/>
</dbReference>
<dbReference type="PDB" id="1J2T">
    <property type="method" value="X-ray"/>
    <property type="resolution" value="1.80 A"/>
    <property type="chains" value="A/B/C/D/E/F=1-260"/>
</dbReference>
<dbReference type="PDB" id="1J2U">
    <property type="method" value="X-ray"/>
    <property type="resolution" value="1.85 A"/>
    <property type="chains" value="A/B/C/D/E/F=1-260"/>
</dbReference>
<dbReference type="PDB" id="1Q3K">
    <property type="method" value="X-ray"/>
    <property type="resolution" value="2.10 A"/>
    <property type="chains" value="A/B/C/D/E/F=2-260"/>
</dbReference>
<dbReference type="PDB" id="1V7Z">
    <property type="method" value="X-ray"/>
    <property type="resolution" value="1.60 A"/>
    <property type="chains" value="A/B/C/D/E/F=1-260"/>
</dbReference>
<dbReference type="PDB" id="3A6D">
    <property type="method" value="X-ray"/>
    <property type="resolution" value="1.90 A"/>
    <property type="chains" value="A/B/C/D/E/F=1-260"/>
</dbReference>
<dbReference type="PDB" id="3A6E">
    <property type="method" value="X-ray"/>
    <property type="resolution" value="2.00 A"/>
    <property type="chains" value="A/B/C/D/E/F=1-260"/>
</dbReference>
<dbReference type="PDB" id="3A6F">
    <property type="method" value="X-ray"/>
    <property type="resolution" value="1.78 A"/>
    <property type="chains" value="A/B/C/D/E/F=1-260"/>
</dbReference>
<dbReference type="PDB" id="3A6G">
    <property type="method" value="X-ray"/>
    <property type="resolution" value="2.00 A"/>
    <property type="chains" value="A/B/C/D/E/F=1-260"/>
</dbReference>
<dbReference type="PDB" id="3A6H">
    <property type="method" value="X-ray"/>
    <property type="resolution" value="2.00 A"/>
    <property type="chains" value="A/B/C/D/E/F=1-260"/>
</dbReference>
<dbReference type="PDB" id="3A6J">
    <property type="method" value="X-ray"/>
    <property type="resolution" value="2.00 A"/>
    <property type="chains" value="A/B/C/D/E/F=1-260"/>
</dbReference>
<dbReference type="PDB" id="3A6K">
    <property type="method" value="X-ray"/>
    <property type="resolution" value="2.20 A"/>
    <property type="chains" value="A/B/C/D/E/F=1-260"/>
</dbReference>
<dbReference type="PDB" id="3A6L">
    <property type="method" value="X-ray"/>
    <property type="resolution" value="2.00 A"/>
    <property type="chains" value="A/B/C/D/E/F=1-260"/>
</dbReference>
<dbReference type="PDBsum" id="1J2T"/>
<dbReference type="PDBsum" id="1J2U"/>
<dbReference type="PDBsum" id="1Q3K"/>
<dbReference type="PDBsum" id="1V7Z"/>
<dbReference type="PDBsum" id="3A6D"/>
<dbReference type="PDBsum" id="3A6E"/>
<dbReference type="PDBsum" id="3A6F"/>
<dbReference type="PDBsum" id="3A6G"/>
<dbReference type="PDBsum" id="3A6H"/>
<dbReference type="PDBsum" id="3A6J"/>
<dbReference type="PDBsum" id="3A6K"/>
<dbReference type="PDBsum" id="3A6L"/>
<dbReference type="SMR" id="P83772"/>
<dbReference type="BioCyc" id="MetaCyc:MONOMER-10962"/>
<dbReference type="BRENDA" id="3.5.2.10">
    <property type="organism ID" value="5092"/>
</dbReference>
<dbReference type="SABIO-RK" id="P83772"/>
<dbReference type="UniPathway" id="UPA00274"/>
<dbReference type="EvolutionaryTrace" id="P83772"/>
<dbReference type="GO" id="GO:0047789">
    <property type="term" value="F:creatininase activity"/>
    <property type="evidence" value="ECO:0000314"/>
    <property type="project" value="UniProtKB"/>
</dbReference>
<dbReference type="GO" id="GO:0016811">
    <property type="term" value="F:hydrolase activity, acting on carbon-nitrogen (but not peptide) bonds, in linear amides"/>
    <property type="evidence" value="ECO:0007669"/>
    <property type="project" value="TreeGrafter"/>
</dbReference>
<dbReference type="GO" id="GO:0030145">
    <property type="term" value="F:manganese ion binding"/>
    <property type="evidence" value="ECO:0000314"/>
    <property type="project" value="UniProtKB"/>
</dbReference>
<dbReference type="GO" id="GO:0008270">
    <property type="term" value="F:zinc ion binding"/>
    <property type="evidence" value="ECO:0000314"/>
    <property type="project" value="UniProtKB"/>
</dbReference>
<dbReference type="GO" id="GO:0006601">
    <property type="term" value="P:creatine biosynthetic process"/>
    <property type="evidence" value="ECO:0000314"/>
    <property type="project" value="UniProtKB"/>
</dbReference>
<dbReference type="GO" id="GO:0006602">
    <property type="term" value="P:creatinine catabolic process"/>
    <property type="evidence" value="ECO:0000314"/>
    <property type="project" value="UniProtKB"/>
</dbReference>
<dbReference type="GO" id="GO:0009231">
    <property type="term" value="P:riboflavin biosynthetic process"/>
    <property type="evidence" value="ECO:0007669"/>
    <property type="project" value="TreeGrafter"/>
</dbReference>
<dbReference type="FunFam" id="3.40.50.10310:FF:000006">
    <property type="entry name" value="Creatinine amidohydrolase"/>
    <property type="match status" value="1"/>
</dbReference>
<dbReference type="Gene3D" id="3.40.50.10310">
    <property type="entry name" value="Creatininase"/>
    <property type="match status" value="1"/>
</dbReference>
<dbReference type="InterPro" id="IPR031034">
    <property type="entry name" value="Creatininase"/>
</dbReference>
<dbReference type="InterPro" id="IPR024087">
    <property type="entry name" value="Creatininase-like_sf"/>
</dbReference>
<dbReference type="InterPro" id="IPR003785">
    <property type="entry name" value="Creatininase/forma_Hydrolase"/>
</dbReference>
<dbReference type="NCBIfam" id="TIGR04448">
    <property type="entry name" value="creatininase"/>
    <property type="match status" value="1"/>
</dbReference>
<dbReference type="PANTHER" id="PTHR35005:SF1">
    <property type="entry name" value="2-AMINO-5-FORMYLAMINO-6-RIBOSYLAMINOPYRIMIDIN-4(3H)-ONE 5'-MONOPHOSPHATE DEFORMYLASE"/>
    <property type="match status" value="1"/>
</dbReference>
<dbReference type="PANTHER" id="PTHR35005">
    <property type="entry name" value="3-DEHYDRO-SCYLLO-INOSOSE HYDROLASE"/>
    <property type="match status" value="1"/>
</dbReference>
<dbReference type="Pfam" id="PF02633">
    <property type="entry name" value="Creatininase"/>
    <property type="match status" value="1"/>
</dbReference>
<dbReference type="SUPFAM" id="SSF102215">
    <property type="entry name" value="Creatininase"/>
    <property type="match status" value="1"/>
</dbReference>